<name>YQHA_SALDC</name>
<evidence type="ECO:0000255" key="1">
    <source>
        <dbReference type="HAMAP-Rule" id="MF_00143"/>
    </source>
</evidence>
<accession>B5FV19</accession>
<proteinExistence type="inferred from homology"/>
<keyword id="KW-1003">Cell membrane</keyword>
<keyword id="KW-0472">Membrane</keyword>
<keyword id="KW-0812">Transmembrane</keyword>
<keyword id="KW-1133">Transmembrane helix</keyword>
<protein>
    <recommendedName>
        <fullName evidence="1">UPF0114 protein YqhA</fullName>
    </recommendedName>
</protein>
<sequence length="164" mass="18490">MERFLENVMYASRWLLAPVYFGLSLALIALALKFFQDILHVLPNVFALAEADLILVLLSLVDMTLVGGLLVMVMFSGYENFVSQLDISAGKEKLNWLGKMDATSLKNKVAASIVAISSIHLLRVFMDAKNVPDNKLMWYVIIHLTFVLSAFVMGYLDRLTRHNH</sequence>
<feature type="chain" id="PRO_1000096274" description="UPF0114 protein YqhA">
    <location>
        <begin position="1"/>
        <end position="164"/>
    </location>
</feature>
<feature type="transmembrane region" description="Helical" evidence="1">
    <location>
        <begin position="15"/>
        <end position="35"/>
    </location>
</feature>
<feature type="transmembrane region" description="Helical" evidence="1">
    <location>
        <begin position="53"/>
        <end position="73"/>
    </location>
</feature>
<feature type="transmembrane region" description="Helical" evidence="1">
    <location>
        <begin position="136"/>
        <end position="156"/>
    </location>
</feature>
<reference key="1">
    <citation type="journal article" date="2011" name="J. Bacteriol.">
        <title>Comparative genomics of 28 Salmonella enterica isolates: evidence for CRISPR-mediated adaptive sublineage evolution.</title>
        <authorList>
            <person name="Fricke W.F."/>
            <person name="Mammel M.K."/>
            <person name="McDermott P.F."/>
            <person name="Tartera C."/>
            <person name="White D.G."/>
            <person name="Leclerc J.E."/>
            <person name="Ravel J."/>
            <person name="Cebula T.A."/>
        </authorList>
    </citation>
    <scope>NUCLEOTIDE SEQUENCE [LARGE SCALE GENOMIC DNA]</scope>
    <source>
        <strain>CT_02021853</strain>
    </source>
</reference>
<gene>
    <name evidence="1" type="primary">yqhA</name>
    <name type="ordered locus">SeD_A3502</name>
</gene>
<organism>
    <name type="scientific">Salmonella dublin (strain CT_02021853)</name>
    <dbReference type="NCBI Taxonomy" id="439851"/>
    <lineage>
        <taxon>Bacteria</taxon>
        <taxon>Pseudomonadati</taxon>
        <taxon>Pseudomonadota</taxon>
        <taxon>Gammaproteobacteria</taxon>
        <taxon>Enterobacterales</taxon>
        <taxon>Enterobacteriaceae</taxon>
        <taxon>Salmonella</taxon>
    </lineage>
</organism>
<dbReference type="EMBL" id="CP001144">
    <property type="protein sequence ID" value="ACH74806.1"/>
    <property type="molecule type" value="Genomic_DNA"/>
</dbReference>
<dbReference type="RefSeq" id="WP_000439333.1">
    <property type="nucleotide sequence ID" value="NC_011205.1"/>
</dbReference>
<dbReference type="KEGG" id="sed:SeD_A3502"/>
<dbReference type="HOGENOM" id="CLU_097887_1_1_6"/>
<dbReference type="Proteomes" id="UP000008322">
    <property type="component" value="Chromosome"/>
</dbReference>
<dbReference type="GO" id="GO:0005886">
    <property type="term" value="C:plasma membrane"/>
    <property type="evidence" value="ECO:0007669"/>
    <property type="project" value="UniProtKB-SubCell"/>
</dbReference>
<dbReference type="HAMAP" id="MF_00143">
    <property type="entry name" value="UPF0114"/>
    <property type="match status" value="1"/>
</dbReference>
<dbReference type="InterPro" id="IPR005134">
    <property type="entry name" value="UPF0114"/>
</dbReference>
<dbReference type="InterPro" id="IPR020761">
    <property type="entry name" value="UPF0114_bac"/>
</dbReference>
<dbReference type="NCBIfam" id="TIGR00645">
    <property type="entry name" value="HI0507"/>
    <property type="match status" value="1"/>
</dbReference>
<dbReference type="PANTHER" id="PTHR38596">
    <property type="entry name" value="UPF0114 PROTEIN YQHA"/>
    <property type="match status" value="1"/>
</dbReference>
<dbReference type="PANTHER" id="PTHR38596:SF1">
    <property type="entry name" value="UPF0114 PROTEIN YQHA"/>
    <property type="match status" value="1"/>
</dbReference>
<dbReference type="Pfam" id="PF03350">
    <property type="entry name" value="UPF0114"/>
    <property type="match status" value="1"/>
</dbReference>
<comment type="subcellular location">
    <subcellularLocation>
        <location evidence="1">Cell membrane</location>
        <topology evidence="1">Multi-pass membrane protein</topology>
    </subcellularLocation>
</comment>
<comment type="similarity">
    <text evidence="1">Belongs to the UPF0114 family.</text>
</comment>